<feature type="transit peptide" description="Mitochondrion" evidence="1">
    <location>
        <begin position="1"/>
        <end position="20"/>
    </location>
</feature>
<feature type="chain" id="PRO_0000058321" description="rRNA methyltransferase 1, mitochondrial">
    <location>
        <begin position="21"/>
        <end position="412"/>
    </location>
</feature>
<protein>
    <recommendedName>
        <fullName evidence="5">rRNA methyltransferase 1, mitochondrial</fullName>
        <ecNumber evidence="4">2.1.1.-</ecNumber>
    </recommendedName>
    <alternativeName>
        <fullName evidence="7">21S rRNA (guanosine(2270)-2'-O)-methyltransferase</fullName>
    </alternativeName>
    <alternativeName>
        <fullName evidence="7">21S rRNA [Gm2270] 2'-O-methyltransferase</fullName>
    </alternativeName>
    <alternativeName>
        <fullName evidence="7">Mitochondrial large ribosomal RNA ribose methylase</fullName>
    </alternativeName>
    <alternativeName>
        <fullName evidence="6">Petite colonies protein 56</fullName>
    </alternativeName>
</protein>
<sequence>MTSLTNAVFKRYLAVTPSAHQALKTRIKKKSSSFDKFFPQQSNSRKKQWETLNEDKASWFKRKYAHVHAREQDRAADPYGKKKAHVEKLKEIKNQAKLNQKSHKSKFQNKDIALKLMNDNPIFEYVYGTNSVYAALLNPSRNCHSRLLYHGTIPSKFLQIVDELKVTTELVDKHRLNLLTNYGVHNNIALETKPLQPVEIAYLGDMDTSSAALSIHELGFNNENIPHELPYGTKTDAKKFPLGLYLDEITDPHNIGAIIRSAYFLGVDFIVMSRRNCSPLTPVVSKTSSGALELLPIFYVDKPLEFFTKSQEMGGWTFITSHLANATSEKYTVGKTISMHDLNGLCNELPVVLVVGNESQGVRTNLKMRSDFFVEIPFGGIEKGNRAPEPIVDSLNVSVATALLIDNILTCK</sequence>
<organism>
    <name type="scientific">Saccharomyces cerevisiae (strain ATCC 204508 / S288c)</name>
    <name type="common">Baker's yeast</name>
    <dbReference type="NCBI Taxonomy" id="559292"/>
    <lineage>
        <taxon>Eukaryota</taxon>
        <taxon>Fungi</taxon>
        <taxon>Dikarya</taxon>
        <taxon>Ascomycota</taxon>
        <taxon>Saccharomycotina</taxon>
        <taxon>Saccharomycetes</taxon>
        <taxon>Saccharomycetales</taxon>
        <taxon>Saccharomycetaceae</taxon>
        <taxon>Saccharomyces</taxon>
    </lineage>
</organism>
<name>MRM1_YEAST</name>
<dbReference type="EC" id="2.1.1.-" evidence="4"/>
<dbReference type="EMBL" id="L19947">
    <property type="protein sequence ID" value="AAA74564.1"/>
    <property type="molecule type" value="Genomic_DNA"/>
</dbReference>
<dbReference type="EMBL" id="Z75107">
    <property type="protein sequence ID" value="CAA99414.1"/>
    <property type="molecule type" value="Genomic_DNA"/>
</dbReference>
<dbReference type="EMBL" id="X03245">
    <property type="protein sequence ID" value="CAA27002.1"/>
    <property type="molecule type" value="Genomic_DNA"/>
</dbReference>
<dbReference type="EMBL" id="BK006948">
    <property type="protein sequence ID" value="DAA10974.1"/>
    <property type="molecule type" value="Genomic_DNA"/>
</dbReference>
<dbReference type="PIR" id="S48881">
    <property type="entry name" value="S48881"/>
</dbReference>
<dbReference type="RefSeq" id="NP_014844.3">
    <property type="nucleotide sequence ID" value="NM_001183620.3"/>
</dbReference>
<dbReference type="SMR" id="P25270"/>
<dbReference type="BioGRID" id="34597">
    <property type="interactions" value="178"/>
</dbReference>
<dbReference type="DIP" id="DIP-2603N"/>
<dbReference type="FunCoup" id="P25270">
    <property type="interactions" value="336"/>
</dbReference>
<dbReference type="IntAct" id="P25270">
    <property type="interactions" value="26"/>
</dbReference>
<dbReference type="MINT" id="P25270"/>
<dbReference type="STRING" id="4932.YOR201C"/>
<dbReference type="GlyGen" id="P25270">
    <property type="glycosylation" value="1 site"/>
</dbReference>
<dbReference type="iPTMnet" id="P25270"/>
<dbReference type="PaxDb" id="4932-YOR201C"/>
<dbReference type="PeptideAtlas" id="P25270"/>
<dbReference type="TopDownProteomics" id="P25270"/>
<dbReference type="EnsemblFungi" id="YOR201C_mRNA">
    <property type="protein sequence ID" value="YOR201C"/>
    <property type="gene ID" value="YOR201C"/>
</dbReference>
<dbReference type="GeneID" id="854376"/>
<dbReference type="KEGG" id="sce:YOR201C"/>
<dbReference type="AGR" id="SGD:S000005727"/>
<dbReference type="SGD" id="S000005727">
    <property type="gene designation" value="MRM1"/>
</dbReference>
<dbReference type="VEuPathDB" id="FungiDB:YOR201C"/>
<dbReference type="eggNOG" id="KOG0838">
    <property type="taxonomic scope" value="Eukaryota"/>
</dbReference>
<dbReference type="GeneTree" id="ENSGT00390000018761"/>
<dbReference type="HOGENOM" id="CLU_021322_5_1_1"/>
<dbReference type="InParanoid" id="P25270"/>
<dbReference type="OMA" id="RKYAHVH"/>
<dbReference type="OrthoDB" id="270651at2759"/>
<dbReference type="BioCyc" id="YEAST:G3O-33707-MONOMER"/>
<dbReference type="BioGRID-ORCS" id="854376">
    <property type="hits" value="9 hits in 10 CRISPR screens"/>
</dbReference>
<dbReference type="PRO" id="PR:P25270"/>
<dbReference type="Proteomes" id="UP000002311">
    <property type="component" value="Chromosome XV"/>
</dbReference>
<dbReference type="RNAct" id="P25270">
    <property type="molecule type" value="protein"/>
</dbReference>
<dbReference type="GO" id="GO:0005739">
    <property type="term" value="C:mitochondrion"/>
    <property type="evidence" value="ECO:0000314"/>
    <property type="project" value="SGD"/>
</dbReference>
<dbReference type="GO" id="GO:0003723">
    <property type="term" value="F:RNA binding"/>
    <property type="evidence" value="ECO:0007669"/>
    <property type="project" value="InterPro"/>
</dbReference>
<dbReference type="GO" id="GO:0016435">
    <property type="term" value="F:rRNA (guanine) methyltransferase activity"/>
    <property type="evidence" value="ECO:0000318"/>
    <property type="project" value="GO_Central"/>
</dbReference>
<dbReference type="GO" id="GO:0008989">
    <property type="term" value="F:rRNA (guanine-N1-)-methyltransferase activity"/>
    <property type="evidence" value="ECO:0000314"/>
    <property type="project" value="SGD"/>
</dbReference>
<dbReference type="GO" id="GO:0000154">
    <property type="term" value="P:rRNA modification"/>
    <property type="evidence" value="ECO:0000314"/>
    <property type="project" value="SGD"/>
</dbReference>
<dbReference type="CDD" id="cd18105">
    <property type="entry name" value="SpoU-like_MRM1"/>
    <property type="match status" value="1"/>
</dbReference>
<dbReference type="FunFam" id="3.40.1280.10:FF:000036">
    <property type="entry name" value="MRM1p Ribose methyltransferase"/>
    <property type="match status" value="1"/>
</dbReference>
<dbReference type="Gene3D" id="3.30.1330.30">
    <property type="match status" value="1"/>
</dbReference>
<dbReference type="Gene3D" id="3.40.1280.10">
    <property type="match status" value="1"/>
</dbReference>
<dbReference type="InterPro" id="IPR029028">
    <property type="entry name" value="Alpha/beta_knot_MTases"/>
</dbReference>
<dbReference type="InterPro" id="IPR047182">
    <property type="entry name" value="MRM1"/>
</dbReference>
<dbReference type="InterPro" id="IPR047261">
    <property type="entry name" value="MRM1_MeTrfase_dom"/>
</dbReference>
<dbReference type="InterPro" id="IPR029064">
    <property type="entry name" value="Ribosomal_eL30-like_sf"/>
</dbReference>
<dbReference type="InterPro" id="IPR004441">
    <property type="entry name" value="rRNA_MeTrfase_TrmH"/>
</dbReference>
<dbReference type="InterPro" id="IPR001537">
    <property type="entry name" value="SpoU_MeTrfase"/>
</dbReference>
<dbReference type="InterPro" id="IPR013123">
    <property type="entry name" value="SpoU_subst-bd"/>
</dbReference>
<dbReference type="InterPro" id="IPR029026">
    <property type="entry name" value="tRNA_m1G_MTases_N"/>
</dbReference>
<dbReference type="NCBIfam" id="TIGR00186">
    <property type="entry name" value="rRNA_methyl_3"/>
    <property type="match status" value="1"/>
</dbReference>
<dbReference type="PANTHER" id="PTHR46103">
    <property type="entry name" value="RRNA METHYLTRANSFERASE 1, MITOCHONDRIAL"/>
    <property type="match status" value="1"/>
</dbReference>
<dbReference type="PANTHER" id="PTHR46103:SF1">
    <property type="entry name" value="RRNA METHYLTRANSFERASE 1, MITOCHONDRIAL"/>
    <property type="match status" value="1"/>
</dbReference>
<dbReference type="Pfam" id="PF00588">
    <property type="entry name" value="SpoU_methylase"/>
    <property type="match status" value="1"/>
</dbReference>
<dbReference type="Pfam" id="PF08032">
    <property type="entry name" value="SpoU_sub_bind"/>
    <property type="match status" value="1"/>
</dbReference>
<dbReference type="SMART" id="SM00967">
    <property type="entry name" value="SpoU_sub_bind"/>
    <property type="match status" value="1"/>
</dbReference>
<dbReference type="SUPFAM" id="SSF75217">
    <property type="entry name" value="alpha/beta knot"/>
    <property type="match status" value="1"/>
</dbReference>
<dbReference type="SUPFAM" id="SSF55315">
    <property type="entry name" value="L30e-like"/>
    <property type="match status" value="1"/>
</dbReference>
<reference key="1">
    <citation type="journal article" date="1993" name="Science">
        <title>Functional requirement of a site-specific ribose methylation in ribosomal RNA.</title>
        <authorList>
            <person name="Sirum-Connolly K."/>
            <person name="Mason T.L."/>
        </authorList>
    </citation>
    <scope>NUCLEOTIDE SEQUENCE [GENOMIC DNA]</scope>
    <scope>FUNCTION</scope>
    <scope>CATALYTIC ACTIVITY</scope>
</reference>
<reference key="2">
    <citation type="journal article" date="1997" name="Nature">
        <title>The nucleotide sequence of Saccharomyces cerevisiae chromosome XV.</title>
        <authorList>
            <person name="Dujon B."/>
            <person name="Albermann K."/>
            <person name="Aldea M."/>
            <person name="Alexandraki D."/>
            <person name="Ansorge W."/>
            <person name="Arino J."/>
            <person name="Benes V."/>
            <person name="Bohn C."/>
            <person name="Bolotin-Fukuhara M."/>
            <person name="Bordonne R."/>
            <person name="Boyer J."/>
            <person name="Camasses A."/>
            <person name="Casamayor A."/>
            <person name="Casas C."/>
            <person name="Cheret G."/>
            <person name="Cziepluch C."/>
            <person name="Daignan-Fornier B."/>
            <person name="Dang V.-D."/>
            <person name="de Haan M."/>
            <person name="Delius H."/>
            <person name="Durand P."/>
            <person name="Fairhead C."/>
            <person name="Feldmann H."/>
            <person name="Gaillon L."/>
            <person name="Galisson F."/>
            <person name="Gamo F.-J."/>
            <person name="Gancedo C."/>
            <person name="Goffeau A."/>
            <person name="Goulding S.E."/>
            <person name="Grivell L.A."/>
            <person name="Habbig B."/>
            <person name="Hand N.J."/>
            <person name="Hani J."/>
            <person name="Hattenhorst U."/>
            <person name="Hebling U."/>
            <person name="Hernando Y."/>
            <person name="Herrero E."/>
            <person name="Heumann K."/>
            <person name="Hiesel R."/>
            <person name="Hilger F."/>
            <person name="Hofmann B."/>
            <person name="Hollenberg C.P."/>
            <person name="Hughes B."/>
            <person name="Jauniaux J.-C."/>
            <person name="Kalogeropoulos A."/>
            <person name="Katsoulou C."/>
            <person name="Kordes E."/>
            <person name="Lafuente M.J."/>
            <person name="Landt O."/>
            <person name="Louis E.J."/>
            <person name="Maarse A.C."/>
            <person name="Madania A."/>
            <person name="Mannhaupt G."/>
            <person name="Marck C."/>
            <person name="Martin R.P."/>
            <person name="Mewes H.-W."/>
            <person name="Michaux G."/>
            <person name="Paces V."/>
            <person name="Parle-McDermott A.G."/>
            <person name="Pearson B.M."/>
            <person name="Perrin A."/>
            <person name="Pettersson B."/>
            <person name="Poch O."/>
            <person name="Pohl T.M."/>
            <person name="Poirey R."/>
            <person name="Portetelle D."/>
            <person name="Pujol A."/>
            <person name="Purnelle B."/>
            <person name="Ramezani Rad M."/>
            <person name="Rechmann S."/>
            <person name="Schwager C."/>
            <person name="Schweizer M."/>
            <person name="Sor F."/>
            <person name="Sterky F."/>
            <person name="Tarassov I.A."/>
            <person name="Teodoru C."/>
            <person name="Tettelin H."/>
            <person name="Thierry A."/>
            <person name="Tobiasch E."/>
            <person name="Tzermia M."/>
            <person name="Uhlen M."/>
            <person name="Unseld M."/>
            <person name="Valens M."/>
            <person name="Vandenbol M."/>
            <person name="Vetter I."/>
            <person name="Vlcek C."/>
            <person name="Voet M."/>
            <person name="Volckaert G."/>
            <person name="Voss H."/>
            <person name="Wambutt R."/>
            <person name="Wedler H."/>
            <person name="Wiemann S."/>
            <person name="Winsor B."/>
            <person name="Wolfe K.H."/>
            <person name="Zollner A."/>
            <person name="Zumstein E."/>
            <person name="Kleine K."/>
        </authorList>
    </citation>
    <scope>NUCLEOTIDE SEQUENCE [LARGE SCALE GENOMIC DNA]</scope>
    <source>
        <strain>ATCC 204508 / S288c</strain>
    </source>
</reference>
<reference key="3">
    <citation type="journal article" date="2014" name="G3 (Bethesda)">
        <title>The reference genome sequence of Saccharomyces cerevisiae: Then and now.</title>
        <authorList>
            <person name="Engel S.R."/>
            <person name="Dietrich F.S."/>
            <person name="Fisk D.G."/>
            <person name="Binkley G."/>
            <person name="Balakrishnan R."/>
            <person name="Costanzo M.C."/>
            <person name="Dwight S.S."/>
            <person name="Hitz B.C."/>
            <person name="Karra K."/>
            <person name="Nash R.S."/>
            <person name="Weng S."/>
            <person name="Wong E.D."/>
            <person name="Lloyd P."/>
            <person name="Skrzypek M.S."/>
            <person name="Miyasato S.R."/>
            <person name="Simison M."/>
            <person name="Cherry J.M."/>
        </authorList>
    </citation>
    <scope>GENOME REANNOTATION</scope>
    <source>
        <strain>ATCC 204508 / S288c</strain>
    </source>
</reference>
<reference key="4">
    <citation type="journal article" date="1985" name="Nucleic Acids Res.">
        <title>Nucleotide sequence and transcriptional mapping of the yeast pet56-his3-ded1 gene region.</title>
        <authorList>
            <person name="Struhl K."/>
        </authorList>
    </citation>
    <scope>NUCLEOTIDE SEQUENCE [GENOMIC DNA] OF 1-95</scope>
</reference>
<reference key="5">
    <citation type="journal article" date="2003" name="Nature">
        <title>Global analysis of protein localization in budding yeast.</title>
        <authorList>
            <person name="Huh W.-K."/>
            <person name="Falvo J.V."/>
            <person name="Gerke L.C."/>
            <person name="Carroll A.S."/>
            <person name="Howson R.W."/>
            <person name="Weissman J.S."/>
            <person name="O'Shea E.K."/>
        </authorList>
    </citation>
    <scope>SUBCELLULAR LOCATION [LARGE SCALE ANALYSIS]</scope>
</reference>
<reference key="6">
    <citation type="journal article" date="2003" name="Nature">
        <title>Global analysis of protein expression in yeast.</title>
        <authorList>
            <person name="Ghaemmaghami S."/>
            <person name="Huh W.-K."/>
            <person name="Bower K."/>
            <person name="Howson R.W."/>
            <person name="Belle A."/>
            <person name="Dephoure N."/>
            <person name="O'Shea E.K."/>
            <person name="Weissman J.S."/>
        </authorList>
    </citation>
    <scope>LEVEL OF PROTEIN EXPRESSION [LARGE SCALE ANALYSIS]</scope>
</reference>
<reference key="7">
    <citation type="journal article" date="2002" name="EMBO J.">
        <title>MRM2 encodes a novel yeast mitochondrial 21S rRNA methyltransferase.</title>
        <authorList>
            <person name="Pintard L."/>
            <person name="Bujnicki J.M."/>
            <person name="Lapeyre B."/>
            <person name="Bonnerot C."/>
        </authorList>
    </citation>
    <scope>GENE NAME</scope>
</reference>
<keyword id="KW-0489">Methyltransferase</keyword>
<keyword id="KW-0496">Mitochondrion</keyword>
<keyword id="KW-1185">Reference proteome</keyword>
<keyword id="KW-0698">rRNA processing</keyword>
<keyword id="KW-0949">S-adenosyl-L-methionine</keyword>
<keyword id="KW-0808">Transferase</keyword>
<keyword id="KW-0809">Transit peptide</keyword>
<accession>P25270</accession>
<accession>D6W2Q8</accession>
<evidence type="ECO:0000255" key="1"/>
<evidence type="ECO:0000269" key="2">
    <source>
    </source>
</evidence>
<evidence type="ECO:0000269" key="3">
    <source>
    </source>
</evidence>
<evidence type="ECO:0000269" key="4">
    <source>
    </source>
</evidence>
<evidence type="ECO:0000303" key="5">
    <source>
    </source>
</evidence>
<evidence type="ECO:0000303" key="6">
    <source>
    </source>
</evidence>
<evidence type="ECO:0000303" key="7">
    <source>
    </source>
</evidence>
<evidence type="ECO:0000305" key="8"/>
<evidence type="ECO:0000312" key="9">
    <source>
        <dbReference type="SGD" id="S000005727"/>
    </source>
</evidence>
<proteinExistence type="evidence at protein level"/>
<gene>
    <name evidence="5" type="primary">MRM1</name>
    <name evidence="6" type="synonym">PET56</name>
    <name evidence="9" type="ordered locus">YOR201C</name>
</gene>
<comment type="function">
    <text evidence="4">S-adenosyl-L-methionine-dependent 2'-O-ribose methyltransferase that catalyzes the formation of 2'-O-methylguanosine at position 2270 (Gm2270) in the 21S mitochondrial large subunit ribosomal RNA (mtLSU rRNA), a universally conserved modification in the peptidyl transferase domain of the mtLSU rRNA. This modification seems to be important for the normal accumulation of the mitochondrial large ribosomal subunit.</text>
</comment>
<comment type="catalytic activity">
    <reaction evidence="4">
        <text>guanosine(2270) in 21S rRNA + S-adenosyl-L-methionine = 2'-O-methylguanosine(2270) in 21S rRNA + S-adenosyl-L-homocysteine + H(+)</text>
        <dbReference type="Rhea" id="RHEA:47768"/>
        <dbReference type="Rhea" id="RHEA-COMP:11905"/>
        <dbReference type="Rhea" id="RHEA-COMP:11906"/>
        <dbReference type="ChEBI" id="CHEBI:15378"/>
        <dbReference type="ChEBI" id="CHEBI:57856"/>
        <dbReference type="ChEBI" id="CHEBI:59789"/>
        <dbReference type="ChEBI" id="CHEBI:74269"/>
        <dbReference type="ChEBI" id="CHEBI:74445"/>
    </reaction>
</comment>
<comment type="subcellular location">
    <subcellularLocation>
        <location evidence="2">Mitochondrion</location>
    </subcellularLocation>
</comment>
<comment type="miscellaneous">
    <text evidence="3">Present with 2760 molecules/cell in log phase SD medium.</text>
</comment>
<comment type="similarity">
    <text evidence="8">Belongs to the class IV-like SAM-binding methyltransferase superfamily. RNA methyltransferase TrmH family.</text>
</comment>